<evidence type="ECO:0000255" key="1">
    <source>
        <dbReference type="HAMAP-Rule" id="MF_01323"/>
    </source>
</evidence>
<evidence type="ECO:0000305" key="2"/>
<sequence>MIDRYTHQQLRIGLVSPQQISTWSKKILPNGEIVGEVTKPYTFHYKTNKPEKDGLFCERIFGPIKSGICACGNYRVIGDEKEDPQFCEQCGVEFVDSRIRRYQMGYIKLAYPVMHVWYLKRLPSYIVTLLDKPLNELEDLVYCNFYFARPIDKKPTFLRLRGLLEYEIQPWKYRIPIFFTTRSFDTFRNREMSTGGGSIRQQLANLDLRIIIDYSLVEWKELEEEEPTGNEWEDRKVGRRKDFLLRRMELAKHFIRTNIEPKWMVLRLLPVLPPELRPIYHIDEDKLVTSDINEIYRRIIYRNNTLTDLLTTSIATPEELIISQEKLLQEAVDALLDNGICGQPMRDDHNRVYKSLSDVIEGKEGRVRETLLGKRVDYSGRSVIVVGPSLSLHRCGLPREIAIELFQAFVIRDLIRKHLASNIGVAKSQIRKKKPIVWEILQEILDDHPVLLNRAPTLHRLGIQAFLPVLVEGRAICLHPLVCKGFNADFDGDQMAVHVPLSLEAQAEARLLMFSHMNLLSPTIGDPISAPTQDMLSGLYVLTSGNRRGICVNRYNPCNRRNYQNEDNNYKYTKKKEPFFCNPYDAIGAYRQKRINLGSPLWLRWRLDQRVIAAREVPIEIHYESVGTYYEIYGHYLIVRSIKKEILYIYIRTTLGHISLYREIEEAIQGFWQGCCNSMLPTGIRVSPG</sequence>
<proteinExistence type="inferred from homology"/>
<accession>Q56P12</accession>
<accession>Q1KXP2</accession>
<accession>Q332Z0</accession>
<geneLocation type="chloroplast"/>
<name>RPOC1_LACSA</name>
<comment type="function">
    <text evidence="1">DNA-dependent RNA polymerase catalyzes the transcription of DNA into RNA using the four ribonucleoside triphosphates as substrates.</text>
</comment>
<comment type="catalytic activity">
    <reaction evidence="1">
        <text>RNA(n) + a ribonucleoside 5'-triphosphate = RNA(n+1) + diphosphate</text>
        <dbReference type="Rhea" id="RHEA:21248"/>
        <dbReference type="Rhea" id="RHEA-COMP:14527"/>
        <dbReference type="Rhea" id="RHEA-COMP:17342"/>
        <dbReference type="ChEBI" id="CHEBI:33019"/>
        <dbReference type="ChEBI" id="CHEBI:61557"/>
        <dbReference type="ChEBI" id="CHEBI:140395"/>
        <dbReference type="EC" id="2.7.7.6"/>
    </reaction>
</comment>
<comment type="cofactor">
    <cofactor evidence="1">
        <name>Mg(2+)</name>
        <dbReference type="ChEBI" id="CHEBI:18420"/>
    </cofactor>
    <text evidence="1">Binds 1 Mg(2+) ion per subunit.</text>
</comment>
<comment type="cofactor">
    <cofactor evidence="1">
        <name>Zn(2+)</name>
        <dbReference type="ChEBI" id="CHEBI:29105"/>
    </cofactor>
    <text evidence="1">Binds 1 Zn(2+) ion per subunit.</text>
</comment>
<comment type="subunit">
    <text evidence="1">In plastids the minimal PEP RNA polymerase catalytic core is composed of four subunits: alpha, beta, beta', and beta''. When a (nuclear-encoded) sigma factor is associated with the core the holoenzyme is formed, which can initiate transcription.</text>
</comment>
<comment type="subcellular location">
    <subcellularLocation>
        <location evidence="1">Plastid</location>
        <location evidence="1">Chloroplast</location>
    </subcellularLocation>
</comment>
<comment type="similarity">
    <text evidence="1">Belongs to the RNA polymerase beta' chain family. RpoC1 subfamily.</text>
</comment>
<comment type="sequence caution" evidence="2">
    <conflict type="erroneous initiation">
        <sequence resource="EMBL-CDS" id="ABD47221"/>
    </conflict>
    <text>Extended N-terminus.</text>
</comment>
<protein>
    <recommendedName>
        <fullName evidence="1">DNA-directed RNA polymerase subunit beta'</fullName>
        <ecNumber evidence="1">2.7.7.6</ecNumber>
    </recommendedName>
    <alternativeName>
        <fullName evidence="1">PEP</fullName>
    </alternativeName>
    <alternativeName>
        <fullName evidence="1">Plastid-encoded RNA polymerase subunit beta'</fullName>
        <shortName evidence="1">RNA polymerase subunit beta'</shortName>
    </alternativeName>
</protein>
<gene>
    <name evidence="1" type="primary">rpoC1</name>
    <name type="ORF">PSC013</name>
</gene>
<dbReference type="EC" id="2.7.7.6" evidence="1"/>
<dbReference type="EMBL" id="AY865171">
    <property type="protein sequence ID" value="AAX58143.1"/>
    <property type="molecule type" value="Genomic_DNA"/>
</dbReference>
<dbReference type="EMBL" id="AP007232">
    <property type="protein sequence ID" value="BAE47582.1"/>
    <property type="molecule type" value="Genomic_DNA"/>
</dbReference>
<dbReference type="EMBL" id="DQ383816">
    <property type="protein sequence ID" value="ABD47221.1"/>
    <property type="status" value="ALT_INIT"/>
    <property type="molecule type" value="Genomic_DNA"/>
</dbReference>
<dbReference type="RefSeq" id="YP_398317.1">
    <property type="nucleotide sequence ID" value="NC_007578.1"/>
</dbReference>
<dbReference type="SMR" id="Q56P12"/>
<dbReference type="GeneID" id="3772823"/>
<dbReference type="KEGG" id="lsv:3772823"/>
<dbReference type="OrthoDB" id="1862828at2759"/>
<dbReference type="GO" id="GO:0009507">
    <property type="term" value="C:chloroplast"/>
    <property type="evidence" value="ECO:0007669"/>
    <property type="project" value="UniProtKB-SubCell"/>
</dbReference>
<dbReference type="GO" id="GO:0000428">
    <property type="term" value="C:DNA-directed RNA polymerase complex"/>
    <property type="evidence" value="ECO:0007669"/>
    <property type="project" value="UniProtKB-KW"/>
</dbReference>
<dbReference type="GO" id="GO:0005739">
    <property type="term" value="C:mitochondrion"/>
    <property type="evidence" value="ECO:0007669"/>
    <property type="project" value="GOC"/>
</dbReference>
<dbReference type="GO" id="GO:0003677">
    <property type="term" value="F:DNA binding"/>
    <property type="evidence" value="ECO:0007669"/>
    <property type="project" value="UniProtKB-UniRule"/>
</dbReference>
<dbReference type="GO" id="GO:0003899">
    <property type="term" value="F:DNA-directed RNA polymerase activity"/>
    <property type="evidence" value="ECO:0007669"/>
    <property type="project" value="UniProtKB-UniRule"/>
</dbReference>
<dbReference type="GO" id="GO:0000287">
    <property type="term" value="F:magnesium ion binding"/>
    <property type="evidence" value="ECO:0007669"/>
    <property type="project" value="UniProtKB-UniRule"/>
</dbReference>
<dbReference type="GO" id="GO:0008270">
    <property type="term" value="F:zinc ion binding"/>
    <property type="evidence" value="ECO:0007669"/>
    <property type="project" value="UniProtKB-UniRule"/>
</dbReference>
<dbReference type="GO" id="GO:0006351">
    <property type="term" value="P:DNA-templated transcription"/>
    <property type="evidence" value="ECO:0007669"/>
    <property type="project" value="UniProtKB-UniRule"/>
</dbReference>
<dbReference type="FunFam" id="4.10.860.120:FF:000007">
    <property type="entry name" value="DNA-directed RNA polymerase subunit gamma"/>
    <property type="match status" value="1"/>
</dbReference>
<dbReference type="Gene3D" id="1.10.40.90">
    <property type="match status" value="1"/>
</dbReference>
<dbReference type="Gene3D" id="2.40.40.20">
    <property type="match status" value="1"/>
</dbReference>
<dbReference type="Gene3D" id="4.10.860.120">
    <property type="entry name" value="RNA polymerase II, clamp domain"/>
    <property type="match status" value="1"/>
</dbReference>
<dbReference type="Gene3D" id="1.10.274.100">
    <property type="entry name" value="RNA polymerase Rpb1, domain 3"/>
    <property type="match status" value="1"/>
</dbReference>
<dbReference type="HAMAP" id="MF_01323">
    <property type="entry name" value="RNApol_bact_RpoC1"/>
    <property type="match status" value="1"/>
</dbReference>
<dbReference type="InterPro" id="IPR045867">
    <property type="entry name" value="DNA-dir_RpoC_beta_prime"/>
</dbReference>
<dbReference type="InterPro" id="IPR000722">
    <property type="entry name" value="RNA_pol_asu"/>
</dbReference>
<dbReference type="InterPro" id="IPR006592">
    <property type="entry name" value="RNA_pol_N"/>
</dbReference>
<dbReference type="InterPro" id="IPR007080">
    <property type="entry name" value="RNA_pol_Rpb1_1"/>
</dbReference>
<dbReference type="InterPro" id="IPR042102">
    <property type="entry name" value="RNA_pol_Rpb1_3_sf"/>
</dbReference>
<dbReference type="InterPro" id="IPR044893">
    <property type="entry name" value="RNA_pol_Rpb1_clamp_domain"/>
</dbReference>
<dbReference type="InterPro" id="IPR034678">
    <property type="entry name" value="RNApol_RpoC1"/>
</dbReference>
<dbReference type="PANTHER" id="PTHR19376">
    <property type="entry name" value="DNA-DIRECTED RNA POLYMERASE"/>
    <property type="match status" value="1"/>
</dbReference>
<dbReference type="PANTHER" id="PTHR19376:SF68">
    <property type="entry name" value="DNA-DIRECTED RNA POLYMERASE SUBUNIT BETA"/>
    <property type="match status" value="1"/>
</dbReference>
<dbReference type="Pfam" id="PF04997">
    <property type="entry name" value="RNA_pol_Rpb1_1"/>
    <property type="match status" value="2"/>
</dbReference>
<dbReference type="Pfam" id="PF00623">
    <property type="entry name" value="RNA_pol_Rpb1_2"/>
    <property type="match status" value="2"/>
</dbReference>
<dbReference type="SMART" id="SM00663">
    <property type="entry name" value="RPOLA_N"/>
    <property type="match status" value="1"/>
</dbReference>
<dbReference type="SUPFAM" id="SSF64484">
    <property type="entry name" value="beta and beta-prime subunits of DNA dependent RNA-polymerase"/>
    <property type="match status" value="1"/>
</dbReference>
<reference key="1">
    <citation type="journal article" date="2005" name="Mol. Biol. Evol.">
        <title>Two chloroplast DNA inversions originated simultaneously during the early evolution of the sunflower family (Asteraceae).</title>
        <authorList>
            <person name="Kim K.-J."/>
            <person name="Choi K.-S."/>
            <person name="Jansen R.K."/>
        </authorList>
    </citation>
    <scope>NUCLEOTIDE SEQUENCE [GENOMIC DNA]</scope>
</reference>
<reference key="2">
    <citation type="journal article" date="2006" name="Transgenic Res.">
        <title>Efficient and stable transformation of Lactuca sativa L. cv. Cisco (lettuce) plastids.</title>
        <authorList>
            <person name="Kanamoto H."/>
            <person name="Yamashita A."/>
            <person name="Asao H."/>
            <person name="Okumura S."/>
            <person name="Takase H."/>
            <person name="Hattori M."/>
            <person name="Yokota A."/>
            <person name="Tomizawa K."/>
        </authorList>
    </citation>
    <scope>NUCLEOTIDE SEQUENCE [LARGE SCALE GENOMIC DNA]</scope>
    <source>
        <strain>cv. Cisco</strain>
    </source>
</reference>
<reference key="3">
    <citation type="submission" date="2006-01" db="EMBL/GenBank/DDBJ databases">
        <title>A comparison of the first two published chloroplast genomes in Asteraceae: Lactuca and Helianthus.</title>
        <authorList>
            <person name="Timme R.E."/>
            <person name="Kuehl J.V."/>
            <person name="Boore J.L."/>
            <person name="Jansen R.K."/>
        </authorList>
    </citation>
    <scope>NUCLEOTIDE SEQUENCE [LARGE SCALE GENOMIC DNA]</scope>
    <source>
        <strain>cv. Salinas</strain>
    </source>
</reference>
<feature type="chain" id="PRO_0000067877" description="DNA-directed RNA polymerase subunit beta'">
    <location>
        <begin position="1"/>
        <end position="689"/>
    </location>
</feature>
<feature type="binding site" evidence="1">
    <location>
        <position position="69"/>
    </location>
    <ligand>
        <name>Zn(2+)</name>
        <dbReference type="ChEBI" id="CHEBI:29105"/>
    </ligand>
</feature>
<feature type="binding site" evidence="1">
    <location>
        <position position="71"/>
    </location>
    <ligand>
        <name>Zn(2+)</name>
        <dbReference type="ChEBI" id="CHEBI:29105"/>
    </ligand>
</feature>
<feature type="binding site" evidence="1">
    <location>
        <position position="87"/>
    </location>
    <ligand>
        <name>Zn(2+)</name>
        <dbReference type="ChEBI" id="CHEBI:29105"/>
    </ligand>
</feature>
<feature type="binding site" evidence="1">
    <location>
        <position position="90"/>
    </location>
    <ligand>
        <name>Zn(2+)</name>
        <dbReference type="ChEBI" id="CHEBI:29105"/>
    </ligand>
</feature>
<feature type="binding site" evidence="1">
    <location>
        <position position="489"/>
    </location>
    <ligand>
        <name>Mg(2+)</name>
        <dbReference type="ChEBI" id="CHEBI:18420"/>
    </ligand>
</feature>
<feature type="binding site" evidence="1">
    <location>
        <position position="491"/>
    </location>
    <ligand>
        <name>Mg(2+)</name>
        <dbReference type="ChEBI" id="CHEBI:18420"/>
    </ligand>
</feature>
<feature type="binding site" evidence="1">
    <location>
        <position position="493"/>
    </location>
    <ligand>
        <name>Mg(2+)</name>
        <dbReference type="ChEBI" id="CHEBI:18420"/>
    </ligand>
</feature>
<feature type="sequence conflict" description="In Ref. 1; AAX58143 and 3; ABD47221." evidence="2" ref="1 3">
    <original>N</original>
    <variation>G</variation>
    <location>
        <position position="144"/>
    </location>
</feature>
<feature type="sequence conflict" description="In Ref. 1; AAX58143." evidence="2" ref="1">
    <original>K</original>
    <variation>E</variation>
    <location>
        <position position="220"/>
    </location>
</feature>
<keyword id="KW-0150">Chloroplast</keyword>
<keyword id="KW-0240">DNA-directed RNA polymerase</keyword>
<keyword id="KW-0460">Magnesium</keyword>
<keyword id="KW-0479">Metal-binding</keyword>
<keyword id="KW-0548">Nucleotidyltransferase</keyword>
<keyword id="KW-0934">Plastid</keyword>
<keyword id="KW-0804">Transcription</keyword>
<keyword id="KW-0808">Transferase</keyword>
<keyword id="KW-0862">Zinc</keyword>
<organism>
    <name type="scientific">Lactuca sativa</name>
    <name type="common">Garden lettuce</name>
    <dbReference type="NCBI Taxonomy" id="4236"/>
    <lineage>
        <taxon>Eukaryota</taxon>
        <taxon>Viridiplantae</taxon>
        <taxon>Streptophyta</taxon>
        <taxon>Embryophyta</taxon>
        <taxon>Tracheophyta</taxon>
        <taxon>Spermatophyta</taxon>
        <taxon>Magnoliopsida</taxon>
        <taxon>eudicotyledons</taxon>
        <taxon>Gunneridae</taxon>
        <taxon>Pentapetalae</taxon>
        <taxon>asterids</taxon>
        <taxon>campanulids</taxon>
        <taxon>Asterales</taxon>
        <taxon>Asteraceae</taxon>
        <taxon>Cichorioideae</taxon>
        <taxon>Cichorieae</taxon>
        <taxon>Lactucinae</taxon>
        <taxon>Lactuca</taxon>
    </lineage>
</organism>